<organism>
    <name type="scientific">Dictyoglomus thermophilum (strain ATCC 35947 / DSM 3960 / H-6-12)</name>
    <dbReference type="NCBI Taxonomy" id="309799"/>
    <lineage>
        <taxon>Bacteria</taxon>
        <taxon>Pseudomonadati</taxon>
        <taxon>Dictyoglomota</taxon>
        <taxon>Dictyoglomia</taxon>
        <taxon>Dictyoglomales</taxon>
        <taxon>Dictyoglomaceae</taxon>
        <taxon>Dictyoglomus</taxon>
    </lineage>
</organism>
<comment type="function">
    <text evidence="1">Catalyzes the methyl esterification of L-isoaspartyl residues in peptides and proteins that result from spontaneous decomposition of normal L-aspartyl and L-asparaginyl residues. It plays a role in the repair and/or degradation of damaged proteins.</text>
</comment>
<comment type="catalytic activity">
    <reaction evidence="1">
        <text>[protein]-L-isoaspartate + S-adenosyl-L-methionine = [protein]-L-isoaspartate alpha-methyl ester + S-adenosyl-L-homocysteine</text>
        <dbReference type="Rhea" id="RHEA:12705"/>
        <dbReference type="Rhea" id="RHEA-COMP:12143"/>
        <dbReference type="Rhea" id="RHEA-COMP:12144"/>
        <dbReference type="ChEBI" id="CHEBI:57856"/>
        <dbReference type="ChEBI" id="CHEBI:59789"/>
        <dbReference type="ChEBI" id="CHEBI:90596"/>
        <dbReference type="ChEBI" id="CHEBI:90598"/>
        <dbReference type="EC" id="2.1.1.77"/>
    </reaction>
</comment>
<comment type="subcellular location">
    <subcellularLocation>
        <location evidence="1">Cytoplasm</location>
    </subcellularLocation>
</comment>
<comment type="similarity">
    <text evidence="1">Belongs to the methyltransferase superfamily. L-isoaspartyl/D-aspartyl protein methyltransferase family.</text>
</comment>
<accession>B5YF00</accession>
<proteinExistence type="inferred from homology"/>
<keyword id="KW-0963">Cytoplasm</keyword>
<keyword id="KW-0489">Methyltransferase</keyword>
<keyword id="KW-0949">S-adenosyl-L-methionine</keyword>
<keyword id="KW-0808">Transferase</keyword>
<feature type="chain" id="PRO_1000093251" description="Protein-L-isoaspartate O-methyltransferase">
    <location>
        <begin position="1"/>
        <end position="220"/>
    </location>
</feature>
<feature type="active site" evidence="1">
    <location>
        <position position="68"/>
    </location>
</feature>
<reference key="1">
    <citation type="journal article" date="2014" name="Genome Announc.">
        <title>Complete Genome Sequence of the Extreme Thermophile Dictyoglomus thermophilum H-6-12.</title>
        <authorList>
            <person name="Coil D.A."/>
            <person name="Badger J.H."/>
            <person name="Forberger H.C."/>
            <person name="Riggs F."/>
            <person name="Madupu R."/>
            <person name="Fedorova N."/>
            <person name="Ward N."/>
            <person name="Robb F.T."/>
            <person name="Eisen J.A."/>
        </authorList>
    </citation>
    <scope>NUCLEOTIDE SEQUENCE [LARGE SCALE GENOMIC DNA]</scope>
    <source>
        <strain>ATCC 35947 / DSM 3960 / H-6-12</strain>
    </source>
</reference>
<gene>
    <name evidence="1" type="primary">pcm</name>
    <name type="ordered locus">DICTH_1286</name>
</gene>
<name>PIMT_DICT6</name>
<sequence>MDFKKFDTPEYEHKRRKLVEILKDEGIKSQKVLNAILKIPRHMFVPQEYLSLSYENEALPIGYGQTISQPYIVALMTEALNLQGNEKVLEIGTGSGYQTAILAELALEIYTVERIKELLEEAKKRLRVLGYNNVYFKLGDGTLGWEEFAPYDRIIVTAASYDIPEPLKEQLKDGGIMVIPIGGRDFQYLYRITKKGDNFYRENLGGVRFVPLKGEYGWKD</sequence>
<evidence type="ECO:0000255" key="1">
    <source>
        <dbReference type="HAMAP-Rule" id="MF_00090"/>
    </source>
</evidence>
<protein>
    <recommendedName>
        <fullName evidence="1">Protein-L-isoaspartate O-methyltransferase</fullName>
        <ecNumber evidence="1">2.1.1.77</ecNumber>
    </recommendedName>
    <alternativeName>
        <fullName evidence="1">L-isoaspartyl protein carboxyl methyltransferase</fullName>
    </alternativeName>
    <alternativeName>
        <fullName evidence="1">Protein L-isoaspartyl methyltransferase</fullName>
    </alternativeName>
    <alternativeName>
        <fullName evidence="1">Protein-beta-aspartate methyltransferase</fullName>
        <shortName evidence="1">PIMT</shortName>
    </alternativeName>
</protein>
<dbReference type="EC" id="2.1.1.77" evidence="1"/>
<dbReference type="EMBL" id="CP001146">
    <property type="protein sequence ID" value="ACI19465.1"/>
    <property type="molecule type" value="Genomic_DNA"/>
</dbReference>
<dbReference type="RefSeq" id="WP_012548097.1">
    <property type="nucleotide sequence ID" value="NC_011297.1"/>
</dbReference>
<dbReference type="SMR" id="B5YF00"/>
<dbReference type="STRING" id="309799.DICTH_1286"/>
<dbReference type="PaxDb" id="309799-DICTH_1286"/>
<dbReference type="KEGG" id="dth:DICTH_1286"/>
<dbReference type="eggNOG" id="COG2518">
    <property type="taxonomic scope" value="Bacteria"/>
</dbReference>
<dbReference type="HOGENOM" id="CLU_055432_2_0_0"/>
<dbReference type="OrthoDB" id="4035289at2"/>
<dbReference type="Proteomes" id="UP000001733">
    <property type="component" value="Chromosome"/>
</dbReference>
<dbReference type="GO" id="GO:0005737">
    <property type="term" value="C:cytoplasm"/>
    <property type="evidence" value="ECO:0007669"/>
    <property type="project" value="UniProtKB-SubCell"/>
</dbReference>
<dbReference type="GO" id="GO:0004719">
    <property type="term" value="F:protein-L-isoaspartate (D-aspartate) O-methyltransferase activity"/>
    <property type="evidence" value="ECO:0007669"/>
    <property type="project" value="UniProtKB-UniRule"/>
</dbReference>
<dbReference type="GO" id="GO:0032259">
    <property type="term" value="P:methylation"/>
    <property type="evidence" value="ECO:0007669"/>
    <property type="project" value="UniProtKB-KW"/>
</dbReference>
<dbReference type="GO" id="GO:0036211">
    <property type="term" value="P:protein modification process"/>
    <property type="evidence" value="ECO:0007669"/>
    <property type="project" value="UniProtKB-UniRule"/>
</dbReference>
<dbReference type="GO" id="GO:0030091">
    <property type="term" value="P:protein repair"/>
    <property type="evidence" value="ECO:0007669"/>
    <property type="project" value="UniProtKB-UniRule"/>
</dbReference>
<dbReference type="CDD" id="cd02440">
    <property type="entry name" value="AdoMet_MTases"/>
    <property type="match status" value="1"/>
</dbReference>
<dbReference type="FunFam" id="3.40.50.150:FF:000010">
    <property type="entry name" value="Protein-L-isoaspartate O-methyltransferase"/>
    <property type="match status" value="1"/>
</dbReference>
<dbReference type="Gene3D" id="3.40.50.150">
    <property type="entry name" value="Vaccinia Virus protein VP39"/>
    <property type="match status" value="1"/>
</dbReference>
<dbReference type="HAMAP" id="MF_00090">
    <property type="entry name" value="PIMT"/>
    <property type="match status" value="1"/>
</dbReference>
<dbReference type="InterPro" id="IPR000682">
    <property type="entry name" value="PCMT"/>
</dbReference>
<dbReference type="InterPro" id="IPR029063">
    <property type="entry name" value="SAM-dependent_MTases_sf"/>
</dbReference>
<dbReference type="NCBIfam" id="TIGR00080">
    <property type="entry name" value="pimt"/>
    <property type="match status" value="1"/>
</dbReference>
<dbReference type="NCBIfam" id="NF001453">
    <property type="entry name" value="PRK00312.1"/>
    <property type="match status" value="1"/>
</dbReference>
<dbReference type="PANTHER" id="PTHR11579">
    <property type="entry name" value="PROTEIN-L-ISOASPARTATE O-METHYLTRANSFERASE"/>
    <property type="match status" value="1"/>
</dbReference>
<dbReference type="PANTHER" id="PTHR11579:SF0">
    <property type="entry name" value="PROTEIN-L-ISOASPARTATE(D-ASPARTATE) O-METHYLTRANSFERASE"/>
    <property type="match status" value="1"/>
</dbReference>
<dbReference type="Pfam" id="PF01135">
    <property type="entry name" value="PCMT"/>
    <property type="match status" value="1"/>
</dbReference>
<dbReference type="SUPFAM" id="SSF53335">
    <property type="entry name" value="S-adenosyl-L-methionine-dependent methyltransferases"/>
    <property type="match status" value="1"/>
</dbReference>
<dbReference type="PROSITE" id="PS01279">
    <property type="entry name" value="PCMT"/>
    <property type="match status" value="1"/>
</dbReference>